<feature type="initiator methionine" description="Removed" evidence="3">
    <location>
        <position position="1"/>
    </location>
</feature>
<feature type="chain" id="PRO_0000127086" description="Origin recognition complex subunit 3">
    <location>
        <begin position="2"/>
        <end position="616"/>
    </location>
</feature>
<feature type="modified residue" description="N-acetylserine" evidence="3">
    <location>
        <position position="2"/>
    </location>
</feature>
<feature type="strand" evidence="6">
    <location>
        <begin position="19"/>
        <end position="25"/>
    </location>
</feature>
<feature type="helix" evidence="6">
    <location>
        <begin position="45"/>
        <end position="47"/>
    </location>
</feature>
<feature type="helix" evidence="6">
    <location>
        <begin position="51"/>
        <end position="92"/>
    </location>
</feature>
<feature type="strand" evidence="6">
    <location>
        <begin position="103"/>
        <end position="108"/>
    </location>
</feature>
<feature type="strand" evidence="6">
    <location>
        <begin position="124"/>
        <end position="131"/>
    </location>
</feature>
<feature type="helix" evidence="6">
    <location>
        <begin position="139"/>
        <end position="157"/>
    </location>
</feature>
<feature type="helix" evidence="6">
    <location>
        <begin position="186"/>
        <end position="189"/>
    </location>
</feature>
<feature type="helix" evidence="6">
    <location>
        <begin position="191"/>
        <end position="195"/>
    </location>
</feature>
<feature type="strand" evidence="6">
    <location>
        <begin position="196"/>
        <end position="206"/>
    </location>
</feature>
<feature type="helix" evidence="6">
    <location>
        <begin position="208"/>
        <end position="210"/>
    </location>
</feature>
<feature type="helix" evidence="6">
    <location>
        <begin position="213"/>
        <end position="223"/>
    </location>
</feature>
<feature type="helix" evidence="6">
    <location>
        <begin position="224"/>
        <end position="228"/>
    </location>
</feature>
<feature type="strand" evidence="6">
    <location>
        <begin position="229"/>
        <end position="242"/>
    </location>
</feature>
<feature type="helix" evidence="6">
    <location>
        <begin position="244"/>
        <end position="249"/>
    </location>
</feature>
<feature type="helix" evidence="6">
    <location>
        <begin position="253"/>
        <end position="259"/>
    </location>
</feature>
<feature type="strand" evidence="6">
    <location>
        <begin position="262"/>
        <end position="267"/>
    </location>
</feature>
<feature type="helix" evidence="6">
    <location>
        <begin position="272"/>
        <end position="274"/>
    </location>
</feature>
<feature type="helix" evidence="6">
    <location>
        <begin position="275"/>
        <end position="287"/>
    </location>
</feature>
<feature type="turn" evidence="6">
    <location>
        <begin position="288"/>
        <end position="291"/>
    </location>
</feature>
<feature type="helix" evidence="6">
    <location>
        <begin position="296"/>
        <end position="307"/>
    </location>
</feature>
<feature type="strand" evidence="6">
    <location>
        <begin position="310"/>
        <end position="312"/>
    </location>
</feature>
<feature type="helix" evidence="6">
    <location>
        <begin position="313"/>
        <end position="331"/>
    </location>
</feature>
<feature type="helix" evidence="6">
    <location>
        <begin position="333"/>
        <end position="338"/>
    </location>
</feature>
<feature type="helix" evidence="6">
    <location>
        <begin position="342"/>
        <end position="345"/>
    </location>
</feature>
<feature type="helix" evidence="6">
    <location>
        <begin position="348"/>
        <end position="354"/>
    </location>
</feature>
<feature type="helix" evidence="6">
    <location>
        <begin position="358"/>
        <end position="369"/>
    </location>
</feature>
<feature type="helix" evidence="5">
    <location>
        <begin position="375"/>
        <end position="380"/>
    </location>
</feature>
<feature type="helix" evidence="6">
    <location>
        <begin position="386"/>
        <end position="394"/>
    </location>
</feature>
<feature type="helix" evidence="6">
    <location>
        <begin position="402"/>
        <end position="415"/>
    </location>
</feature>
<feature type="turn" evidence="4">
    <location>
        <begin position="416"/>
        <end position="418"/>
    </location>
</feature>
<feature type="helix" evidence="6">
    <location>
        <begin position="424"/>
        <end position="433"/>
    </location>
</feature>
<feature type="helix" evidence="6">
    <location>
        <begin position="436"/>
        <end position="440"/>
    </location>
</feature>
<feature type="strand" evidence="6">
    <location>
        <begin position="443"/>
        <end position="445"/>
    </location>
</feature>
<feature type="helix" evidence="6">
    <location>
        <begin position="447"/>
        <end position="449"/>
    </location>
</feature>
<feature type="turn" evidence="6">
    <location>
        <begin position="450"/>
        <end position="453"/>
    </location>
</feature>
<feature type="strand" evidence="6">
    <location>
        <begin position="464"/>
        <end position="468"/>
    </location>
</feature>
<feature type="strand" evidence="7">
    <location>
        <begin position="471"/>
        <end position="473"/>
    </location>
</feature>
<feature type="helix" evidence="6">
    <location>
        <begin position="474"/>
        <end position="479"/>
    </location>
</feature>
<feature type="helix" evidence="6">
    <location>
        <begin position="483"/>
        <end position="492"/>
    </location>
</feature>
<feature type="helix" evidence="6">
    <location>
        <begin position="494"/>
        <end position="496"/>
    </location>
</feature>
<feature type="turn" evidence="4">
    <location>
        <begin position="504"/>
        <end position="507"/>
    </location>
</feature>
<feature type="strand" evidence="4">
    <location>
        <begin position="508"/>
        <end position="510"/>
    </location>
</feature>
<feature type="helix" evidence="6">
    <location>
        <begin position="511"/>
        <end position="516"/>
    </location>
</feature>
<feature type="helix" evidence="6">
    <location>
        <begin position="520"/>
        <end position="529"/>
    </location>
</feature>
<feature type="strand" evidence="6">
    <location>
        <begin position="533"/>
        <end position="536"/>
    </location>
</feature>
<feature type="helix" evidence="6">
    <location>
        <begin position="537"/>
        <end position="545"/>
    </location>
</feature>
<feature type="helix" evidence="6">
    <location>
        <begin position="550"/>
        <end position="557"/>
    </location>
</feature>
<feature type="helix" evidence="6">
    <location>
        <begin position="564"/>
        <end position="571"/>
    </location>
</feature>
<feature type="helix" evidence="6">
    <location>
        <begin position="575"/>
        <end position="593"/>
    </location>
</feature>
<feature type="strand" evidence="6">
    <location>
        <begin position="596"/>
        <end position="600"/>
    </location>
</feature>
<feature type="turn" evidence="6">
    <location>
        <begin position="602"/>
        <end position="604"/>
    </location>
</feature>
<feature type="strand" evidence="6">
    <location>
        <begin position="607"/>
        <end position="610"/>
    </location>
</feature>
<organism>
    <name type="scientific">Saccharomyces cerevisiae (strain ATCC 204508 / S288c)</name>
    <name type="common">Baker's yeast</name>
    <dbReference type="NCBI Taxonomy" id="559292"/>
    <lineage>
        <taxon>Eukaryota</taxon>
        <taxon>Fungi</taxon>
        <taxon>Dikarya</taxon>
        <taxon>Ascomycota</taxon>
        <taxon>Saccharomycotina</taxon>
        <taxon>Saccharomycetes</taxon>
        <taxon>Saccharomycetales</taxon>
        <taxon>Saccharomycetaceae</taxon>
        <taxon>Saccharomyces</taxon>
    </lineage>
</organism>
<proteinExistence type="evidence at protein level"/>
<evidence type="ECO:0000269" key="1">
    <source>
    </source>
</evidence>
<evidence type="ECO:0000305" key="2"/>
<evidence type="ECO:0007744" key="3">
    <source>
    </source>
</evidence>
<evidence type="ECO:0007829" key="4">
    <source>
        <dbReference type="PDB" id="5ZR1"/>
    </source>
</evidence>
<evidence type="ECO:0007829" key="5">
    <source>
        <dbReference type="PDB" id="7TJF"/>
    </source>
</evidence>
<evidence type="ECO:0007829" key="6">
    <source>
        <dbReference type="PDB" id="7TJH"/>
    </source>
</evidence>
<evidence type="ECO:0007829" key="7">
    <source>
        <dbReference type="PDB" id="7TJI"/>
    </source>
</evidence>
<comment type="function">
    <text evidence="1">Component of the origin recognition complex (ORC) that binds origins of replication. It has a role in both chromosomal replication and mating type transcriptional silencing. Binds to the ARS consensus sequence (ACS) of origins of replication.</text>
</comment>
<comment type="subunit">
    <text evidence="1">Component of the origin recognition complex (ORC) composed of at least ORC1, ORC2, ORC3, ORC4, ORC5 and ORC6. Interacts with ORC6.</text>
</comment>
<comment type="interaction">
    <interactant intactId="EBI-12576">
        <id>P54790</id>
    </interactant>
    <interactant intactId="EBI-12572">
        <id>P32833</id>
        <label>ORC2</label>
    </interactant>
    <organismsDiffer>false</organismsDiffer>
    <experiments>7</experiments>
</comment>
<comment type="interaction">
    <interactant intactId="EBI-12576">
        <id>P54790</id>
    </interactant>
    <interactant intactId="EBI-12580">
        <id>P54791</id>
        <label>ORC4</label>
    </interactant>
    <organismsDiffer>false</organismsDiffer>
    <experiments>4</experiments>
</comment>
<comment type="interaction">
    <interactant intactId="EBI-12576">
        <id>P54790</id>
    </interactant>
    <interactant intactId="EBI-12588">
        <id>P38826</id>
        <label>ORC6</label>
    </interactant>
    <organismsDiffer>false</organismsDiffer>
    <experiments>5</experiments>
</comment>
<comment type="interaction">
    <interactant intactId="EBI-12576">
        <id>P54790</id>
    </interactant>
    <interactant intactId="EBI-3913">
        <id>Q12495</id>
        <label>RLF2</label>
    </interactant>
    <organismsDiffer>false</organismsDiffer>
    <experiments>3</experiments>
</comment>
<comment type="subcellular location">
    <subcellularLocation>
        <location>Nucleus</location>
    </subcellularLocation>
</comment>
<comment type="similarity">
    <text evidence="2">Belongs to the ORC3 family.</text>
</comment>
<accession>P54790</accession>
<accession>D6VXZ9</accession>
<sequence length="616" mass="72077">MSDLNQSKKMNVSEFADAQRSHYTVYPSLPQSNKNDKHIPFVKLLSGKESEVNVEKRWELYHQLHSHFHDQVDHIIDNIEADLKAEISDLLYSETTQKRRCFNTIFLLGSDSTTKIELKDESSRYNVLIELTPKESPNVRMMLRRSMYKLYSAADAEEHPTIKYEDINDEDGDFTEQNNDVSYDLSLVENFKRLFGKDLAMVFNFKDVDSINFNTLDNFIILLKSAFKYDHVKISLIFNINTNLSNIEKNLRQSTIRLLKRNYHKLDVSSNKGFKYGNQIFQSFLDTVDGKLNLSDRFVEFILSKMANNTNHNLQLLTKMLDYSLMSYFFQNAFSVFIDPVNVDFLNDDYLKILSRCPTFMFFVEGLIKQHAPADEILSLLTNKNRGLEEFFVEFLVRENPINGHAKFVARFLEEELNITNFNLIELYHNLLIGKLDSYLDRWSACKEYKDRLHFEPIDTIFQELFTLDNRSGLLTQSIFPSYKSNIEDNLLSWEQVLPSLDKENYDTLSGDLDKIMAPVLGQLFKLYREANMTINIYDFYIAFRETLPKEEILNFIRKDPSNTKLLELAETPDAFDKVALILFMQAIFAFENMGLIKFQSTKSYDLVEKCVWRGI</sequence>
<reference key="1">
    <citation type="journal article" date="1995" name="Cell">
        <title>The multidomain structure of Orc1p reveals similarity to regulators of DNA replication and transcriptional silencing.</title>
        <authorList>
            <person name="Bell S.P."/>
            <person name="Mitchell J."/>
            <person name="Leber J."/>
            <person name="Kobayashi R."/>
            <person name="Stillman B."/>
        </authorList>
    </citation>
    <scope>NUCLEOTIDE SEQUENCE [GENOMIC DNA]</scope>
    <scope>PARTIAL PROTEIN SEQUENCE</scope>
</reference>
<reference key="2">
    <citation type="journal article" date="1996" name="Mol. Cell. Biol.">
        <title>Characterization of an essential Orc2p-associated factor that plays a role in DNA replication.</title>
        <authorList>
            <person name="Hardy C.F.J."/>
        </authorList>
    </citation>
    <scope>NUCLEOTIDE SEQUENCE [GENOMIC DNA]</scope>
</reference>
<reference key="3">
    <citation type="journal article" date="1996" name="Yeast">
        <title>Sequence analysis of the CEN12 region of Saccharomyces cerevisiae on a 43.7 kb fragment of chromosome XII including an open reading frame homologous to the human cystic fibrosis transmembrane conductance regulator protein CFTR.</title>
        <authorList>
            <person name="Miosga T."/>
            <person name="Zimmermann F.K."/>
        </authorList>
    </citation>
    <scope>NUCLEOTIDE SEQUENCE [GENOMIC DNA]</scope>
    <source>
        <strain>ATCC 90840 / EAY235 / FY23</strain>
    </source>
</reference>
<reference key="4">
    <citation type="journal article" date="1997" name="Nature">
        <title>The nucleotide sequence of Saccharomyces cerevisiae chromosome XII.</title>
        <authorList>
            <person name="Johnston M."/>
            <person name="Hillier L.W."/>
            <person name="Riles L."/>
            <person name="Albermann K."/>
            <person name="Andre B."/>
            <person name="Ansorge W."/>
            <person name="Benes V."/>
            <person name="Brueckner M."/>
            <person name="Delius H."/>
            <person name="Dubois E."/>
            <person name="Duesterhoeft A."/>
            <person name="Entian K.-D."/>
            <person name="Floeth M."/>
            <person name="Goffeau A."/>
            <person name="Hebling U."/>
            <person name="Heumann K."/>
            <person name="Heuss-Neitzel D."/>
            <person name="Hilbert H."/>
            <person name="Hilger F."/>
            <person name="Kleine K."/>
            <person name="Koetter P."/>
            <person name="Louis E.J."/>
            <person name="Messenguy F."/>
            <person name="Mewes H.-W."/>
            <person name="Miosga T."/>
            <person name="Moestl D."/>
            <person name="Mueller-Auer S."/>
            <person name="Nentwich U."/>
            <person name="Obermaier B."/>
            <person name="Piravandi E."/>
            <person name="Pohl T.M."/>
            <person name="Portetelle D."/>
            <person name="Purnelle B."/>
            <person name="Rechmann S."/>
            <person name="Rieger M."/>
            <person name="Rinke M."/>
            <person name="Rose M."/>
            <person name="Scharfe M."/>
            <person name="Scherens B."/>
            <person name="Scholler P."/>
            <person name="Schwager C."/>
            <person name="Schwarz S."/>
            <person name="Underwood A.P."/>
            <person name="Urrestarazu L.A."/>
            <person name="Vandenbol M."/>
            <person name="Verhasselt P."/>
            <person name="Vierendeels F."/>
            <person name="Voet M."/>
            <person name="Volckaert G."/>
            <person name="Voss H."/>
            <person name="Wambutt R."/>
            <person name="Wedler E."/>
            <person name="Wedler H."/>
            <person name="Zimmermann F.K."/>
            <person name="Zollner A."/>
            <person name="Hani J."/>
            <person name="Hoheisel J.D."/>
        </authorList>
    </citation>
    <scope>NUCLEOTIDE SEQUENCE [LARGE SCALE GENOMIC DNA]</scope>
    <source>
        <strain>ATCC 204508 / S288c</strain>
    </source>
</reference>
<reference key="5">
    <citation type="journal article" date="2014" name="G3 (Bethesda)">
        <title>The reference genome sequence of Saccharomyces cerevisiae: Then and now.</title>
        <authorList>
            <person name="Engel S.R."/>
            <person name="Dietrich F.S."/>
            <person name="Fisk D.G."/>
            <person name="Binkley G."/>
            <person name="Balakrishnan R."/>
            <person name="Costanzo M.C."/>
            <person name="Dwight S.S."/>
            <person name="Hitz B.C."/>
            <person name="Karra K."/>
            <person name="Nash R.S."/>
            <person name="Weng S."/>
            <person name="Wong E.D."/>
            <person name="Lloyd P."/>
            <person name="Skrzypek M.S."/>
            <person name="Miyasato S.R."/>
            <person name="Simison M."/>
            <person name="Cherry J.M."/>
        </authorList>
    </citation>
    <scope>GENOME REANNOTATION</scope>
    <source>
        <strain>ATCC 204508 / S288c</strain>
    </source>
</reference>
<reference key="6">
    <citation type="journal article" date="2007" name="Genes Dev.">
        <title>Orc6 is required for dynamic recruitment of Cdt1 during repeated Mcm2-7 loading.</title>
        <authorList>
            <person name="Chen S."/>
            <person name="de Vries M.A."/>
            <person name="Bell S.P."/>
        </authorList>
    </citation>
    <scope>FUNCTION</scope>
    <scope>INTERACTION WITH ORC6</scope>
</reference>
<reference key="7">
    <citation type="journal article" date="2012" name="Proc. Natl. Acad. Sci. U.S.A.">
        <title>N-terminal acetylome analyses and functional insights of the N-terminal acetyltransferase NatB.</title>
        <authorList>
            <person name="Van Damme P."/>
            <person name="Lasa M."/>
            <person name="Polevoda B."/>
            <person name="Gazquez C."/>
            <person name="Elosegui-Artola A."/>
            <person name="Kim D.S."/>
            <person name="De Juan-Pardo E."/>
            <person name="Demeyer K."/>
            <person name="Hole K."/>
            <person name="Larrea E."/>
            <person name="Timmerman E."/>
            <person name="Prieto J."/>
            <person name="Arnesen T."/>
            <person name="Sherman F."/>
            <person name="Gevaert K."/>
            <person name="Aldabe R."/>
        </authorList>
    </citation>
    <scope>ACETYLATION [LARGE SCALE ANALYSIS] AT SER-2</scope>
    <scope>CLEAVAGE OF INITIATOR METHIONINE [LARGE SCALE ANALYSIS]</scope>
    <scope>IDENTIFICATION BY MASS SPECTROMETRY [LARGE SCALE ANALYSIS]</scope>
</reference>
<dbReference type="EMBL" id="U34861">
    <property type="protein sequence ID" value="AAB38249.1"/>
    <property type="molecule type" value="Genomic_DNA"/>
</dbReference>
<dbReference type="EMBL" id="U48888">
    <property type="protein sequence ID" value="AAC49270.1"/>
    <property type="molecule type" value="Genomic_DNA"/>
</dbReference>
<dbReference type="EMBL" id="X91488">
    <property type="protein sequence ID" value="CAA62765.1"/>
    <property type="molecule type" value="Genomic_DNA"/>
</dbReference>
<dbReference type="EMBL" id="Z73109">
    <property type="protein sequence ID" value="CAA97447.1"/>
    <property type="molecule type" value="Genomic_DNA"/>
</dbReference>
<dbReference type="EMBL" id="BK006945">
    <property type="protein sequence ID" value="DAA09315.1"/>
    <property type="molecule type" value="Genomic_DNA"/>
</dbReference>
<dbReference type="PIR" id="S64746">
    <property type="entry name" value="S64746"/>
</dbReference>
<dbReference type="RefSeq" id="NP_013097.1">
    <property type="nucleotide sequence ID" value="NM_001181824.1"/>
</dbReference>
<dbReference type="PDB" id="5V8F">
    <property type="method" value="EM"/>
    <property type="resolution" value="3.90 A"/>
    <property type="chains" value="C=1-616"/>
</dbReference>
<dbReference type="PDB" id="5ZR1">
    <property type="method" value="EM"/>
    <property type="resolution" value="3.00 A"/>
    <property type="chains" value="C=1-616"/>
</dbReference>
<dbReference type="PDB" id="6RQC">
    <property type="method" value="EM"/>
    <property type="resolution" value="4.40 A"/>
    <property type="chains" value="C=1-616"/>
</dbReference>
<dbReference type="PDB" id="6WGC">
    <property type="method" value="EM"/>
    <property type="resolution" value="4.30 A"/>
    <property type="chains" value="C=1-616"/>
</dbReference>
<dbReference type="PDB" id="6WGG">
    <property type="method" value="EM"/>
    <property type="resolution" value="8.10 A"/>
    <property type="chains" value="C=1-616"/>
</dbReference>
<dbReference type="PDB" id="6WGI">
    <property type="method" value="EM"/>
    <property type="resolution" value="10.00 A"/>
    <property type="chains" value="C=1-616"/>
</dbReference>
<dbReference type="PDB" id="7MCA">
    <property type="method" value="EM"/>
    <property type="resolution" value="3.60 A"/>
    <property type="chains" value="C=1-616"/>
</dbReference>
<dbReference type="PDB" id="7TJF">
    <property type="method" value="EM"/>
    <property type="resolution" value="2.60 A"/>
    <property type="chains" value="C=1-616"/>
</dbReference>
<dbReference type="PDB" id="7TJH">
    <property type="method" value="EM"/>
    <property type="resolution" value="2.50 A"/>
    <property type="chains" value="C=1-616"/>
</dbReference>
<dbReference type="PDB" id="7TJI">
    <property type="method" value="EM"/>
    <property type="resolution" value="2.70 A"/>
    <property type="chains" value="C=1-616"/>
</dbReference>
<dbReference type="PDB" id="7TJJ">
    <property type="method" value="EM"/>
    <property type="resolution" value="2.70 A"/>
    <property type="chains" value="C=1-616"/>
</dbReference>
<dbReference type="PDB" id="7TJK">
    <property type="method" value="EM"/>
    <property type="resolution" value="2.70 A"/>
    <property type="chains" value="C=1-616"/>
</dbReference>
<dbReference type="PDB" id="9BCX">
    <property type="method" value="EM"/>
    <property type="resolution" value="6.10 A"/>
    <property type="chains" value="D=1-616"/>
</dbReference>
<dbReference type="PDB" id="9GJP">
    <property type="method" value="EM"/>
    <property type="resolution" value="3.40 A"/>
    <property type="chains" value="C=1-616"/>
</dbReference>
<dbReference type="PDB" id="9GJW">
    <property type="method" value="EM"/>
    <property type="resolution" value="3.30 A"/>
    <property type="chains" value="C=1-616"/>
</dbReference>
<dbReference type="PDB" id="9GM5">
    <property type="method" value="EM"/>
    <property type="resolution" value="3.70 A"/>
    <property type="chains" value="C=1-616"/>
</dbReference>
<dbReference type="PDBsum" id="5V8F"/>
<dbReference type="PDBsum" id="5ZR1"/>
<dbReference type="PDBsum" id="6RQC"/>
<dbReference type="PDBsum" id="6WGC"/>
<dbReference type="PDBsum" id="6WGG"/>
<dbReference type="PDBsum" id="6WGI"/>
<dbReference type="PDBsum" id="7MCA"/>
<dbReference type="PDBsum" id="7TJF"/>
<dbReference type="PDBsum" id="7TJH"/>
<dbReference type="PDBsum" id="7TJI"/>
<dbReference type="PDBsum" id="7TJJ"/>
<dbReference type="PDBsum" id="7TJK"/>
<dbReference type="PDBsum" id="9BCX"/>
<dbReference type="PDBsum" id="9GJP"/>
<dbReference type="PDBsum" id="9GJW"/>
<dbReference type="PDBsum" id="9GM5"/>
<dbReference type="EMDB" id="EMD-21662"/>
<dbReference type="EMDB" id="EMD-21665"/>
<dbReference type="EMDB" id="EMD-21666"/>
<dbReference type="EMDB" id="EMD-23755"/>
<dbReference type="EMDB" id="EMD-23818"/>
<dbReference type="EMDB" id="EMD-25924"/>
<dbReference type="EMDB" id="EMD-25925"/>
<dbReference type="EMDB" id="EMD-25926"/>
<dbReference type="EMDB" id="EMD-25927"/>
<dbReference type="EMDB" id="EMD-25928"/>
<dbReference type="EMDB" id="EMD-44441"/>
<dbReference type="EMDB" id="EMD-4980"/>
<dbReference type="EMDB" id="EMD-51401"/>
<dbReference type="EMDB" id="EMD-51407"/>
<dbReference type="EMDB" id="EMD-51441"/>
<dbReference type="EMDB" id="EMD-6941"/>
<dbReference type="EMDB" id="EMD-8540"/>
<dbReference type="SMR" id="P54790"/>
<dbReference type="BioGRID" id="31247">
    <property type="interactions" value="254"/>
</dbReference>
<dbReference type="ComplexPortal" id="CPX-768">
    <property type="entry name" value="Nuclear origin recognition complex"/>
</dbReference>
<dbReference type="DIP" id="DIP-2286N"/>
<dbReference type="FunCoup" id="P54790">
    <property type="interactions" value="1260"/>
</dbReference>
<dbReference type="IntAct" id="P54790">
    <property type="interactions" value="20"/>
</dbReference>
<dbReference type="MINT" id="P54790"/>
<dbReference type="STRING" id="4932.YLL004W"/>
<dbReference type="iPTMnet" id="P54790"/>
<dbReference type="PaxDb" id="4932-YLL004W"/>
<dbReference type="PeptideAtlas" id="P54790"/>
<dbReference type="EnsemblFungi" id="YLL004W_mRNA">
    <property type="protein sequence ID" value="YLL004W"/>
    <property type="gene ID" value="YLL004W"/>
</dbReference>
<dbReference type="GeneID" id="850656"/>
<dbReference type="KEGG" id="sce:YLL004W"/>
<dbReference type="AGR" id="SGD:S000003927"/>
<dbReference type="SGD" id="S000003927">
    <property type="gene designation" value="ORC3"/>
</dbReference>
<dbReference type="VEuPathDB" id="FungiDB:YLL004W"/>
<dbReference type="eggNOG" id="KOG2538">
    <property type="taxonomic scope" value="Eukaryota"/>
</dbReference>
<dbReference type="GeneTree" id="ENSGT00390000011376"/>
<dbReference type="HOGENOM" id="CLU_403318_0_0_1"/>
<dbReference type="InParanoid" id="P54790"/>
<dbReference type="OMA" id="CPTFMFF"/>
<dbReference type="OrthoDB" id="10265211at2759"/>
<dbReference type="BioCyc" id="YEAST:G3O-32109-MONOMER"/>
<dbReference type="Reactome" id="R-SCE-176187">
    <property type="pathway name" value="Activation of ATR in response to replication stress"/>
</dbReference>
<dbReference type="Reactome" id="R-SCE-68616">
    <property type="pathway name" value="Assembly of the ORC complex at the origin of replication"/>
</dbReference>
<dbReference type="Reactome" id="R-SCE-68689">
    <property type="pathway name" value="CDC6 association with the ORC:origin complex"/>
</dbReference>
<dbReference type="Reactome" id="R-SCE-68962">
    <property type="pathway name" value="Activation of the pre-replicative complex"/>
</dbReference>
<dbReference type="BioGRID-ORCS" id="850656">
    <property type="hits" value="1 hit in 10 CRISPR screens"/>
</dbReference>
<dbReference type="PRO" id="PR:P54790"/>
<dbReference type="Proteomes" id="UP000002311">
    <property type="component" value="Chromosome XII"/>
</dbReference>
<dbReference type="RNAct" id="P54790">
    <property type="molecule type" value="protein"/>
</dbReference>
<dbReference type="GO" id="GO:0031261">
    <property type="term" value="C:DNA replication preinitiation complex"/>
    <property type="evidence" value="ECO:0000314"/>
    <property type="project" value="SGD"/>
</dbReference>
<dbReference type="GO" id="GO:0005664">
    <property type="term" value="C:nuclear origin of replication recognition complex"/>
    <property type="evidence" value="ECO:0000314"/>
    <property type="project" value="SGD"/>
</dbReference>
<dbReference type="GO" id="GO:0005656">
    <property type="term" value="C:nuclear pre-replicative complex"/>
    <property type="evidence" value="ECO:0000314"/>
    <property type="project" value="SGD"/>
</dbReference>
<dbReference type="GO" id="GO:0005654">
    <property type="term" value="C:nucleoplasm"/>
    <property type="evidence" value="ECO:0000304"/>
    <property type="project" value="Reactome"/>
</dbReference>
<dbReference type="GO" id="GO:0005634">
    <property type="term" value="C:nucleus"/>
    <property type="evidence" value="ECO:0000269"/>
    <property type="project" value="ComplexPortal"/>
</dbReference>
<dbReference type="GO" id="GO:0003682">
    <property type="term" value="F:chromatin binding"/>
    <property type="evidence" value="ECO:0000314"/>
    <property type="project" value="SGD"/>
</dbReference>
<dbReference type="GO" id="GO:0003688">
    <property type="term" value="F:DNA replication origin binding"/>
    <property type="evidence" value="ECO:0000314"/>
    <property type="project" value="SGD"/>
</dbReference>
<dbReference type="GO" id="GO:0006270">
    <property type="term" value="P:DNA replication initiation"/>
    <property type="evidence" value="ECO:0000315"/>
    <property type="project" value="SGD"/>
</dbReference>
<dbReference type="GO" id="GO:0006267">
    <property type="term" value="P:pre-replicative complex assembly involved in nuclear cell cycle DNA replication"/>
    <property type="evidence" value="ECO:0000314"/>
    <property type="project" value="SGD"/>
</dbReference>
<dbReference type="GO" id="GO:0030466">
    <property type="term" value="P:silent mating-type cassette heterochromatin formation"/>
    <property type="evidence" value="ECO:0000314"/>
    <property type="project" value="SGD"/>
</dbReference>
<dbReference type="CDD" id="cd20704">
    <property type="entry name" value="Orc3"/>
    <property type="match status" value="1"/>
</dbReference>
<dbReference type="InterPro" id="IPR018247">
    <property type="entry name" value="EF_Hand_1_Ca_BS"/>
</dbReference>
<dbReference type="InterPro" id="IPR020795">
    <property type="entry name" value="ORC3"/>
</dbReference>
<dbReference type="InterPro" id="IPR045667">
    <property type="entry name" value="ORC3_N"/>
</dbReference>
<dbReference type="InterPro" id="IPR040855">
    <property type="entry name" value="ORC_WH_C"/>
</dbReference>
<dbReference type="PANTHER" id="PTHR12748">
    <property type="entry name" value="ORIGIN RECOGNITION COMPLEX SUBUNIT 3"/>
    <property type="match status" value="1"/>
</dbReference>
<dbReference type="PANTHER" id="PTHR12748:SF0">
    <property type="entry name" value="ORIGIN RECOGNITION COMPLEX SUBUNIT 3"/>
    <property type="match status" value="1"/>
</dbReference>
<dbReference type="Pfam" id="PF07034">
    <property type="entry name" value="ORC3_N"/>
    <property type="match status" value="1"/>
</dbReference>
<dbReference type="Pfam" id="PF18137">
    <property type="entry name" value="ORC_WH_C"/>
    <property type="match status" value="1"/>
</dbReference>
<keyword id="KW-0002">3D-structure</keyword>
<keyword id="KW-0007">Acetylation</keyword>
<keyword id="KW-0903">Direct protein sequencing</keyword>
<keyword id="KW-0235">DNA replication</keyword>
<keyword id="KW-0238">DNA-binding</keyword>
<keyword id="KW-0539">Nucleus</keyword>
<keyword id="KW-1185">Reference proteome</keyword>
<gene>
    <name type="primary">ORC3</name>
    <name type="synonym">OAF1</name>
    <name type="synonym">OIF1</name>
    <name type="ordered locus">YLL004W</name>
    <name type="ORF">L1365</name>
</gene>
<name>ORC3_YEAST</name>
<protein>
    <recommendedName>
        <fullName>Origin recognition complex subunit 3</fullName>
    </recommendedName>
    <alternativeName>
        <fullName>Origin recognition complex 62 kDa subunit</fullName>
    </alternativeName>
</protein>